<organism>
    <name type="scientific">Clostridium botulinum (strain Kyoto / Type A2)</name>
    <dbReference type="NCBI Taxonomy" id="536232"/>
    <lineage>
        <taxon>Bacteria</taxon>
        <taxon>Bacillati</taxon>
        <taxon>Bacillota</taxon>
        <taxon>Clostridia</taxon>
        <taxon>Eubacteriales</taxon>
        <taxon>Clostridiaceae</taxon>
        <taxon>Clostridium</taxon>
    </lineage>
</organism>
<sequence>MKDVLERFLGYIKVDTQSSEESDTVPTTKTQLEFAKKLGEELKAIGLKDVSVDENGYVMATLESNIDKKVPTIGFIAHMDTSPDLSGTNINPRIVEKYDGQDIVLNKEKNIVLKINEFPEILEYKGQDIVVTDGNTLLGADDKAGIAEIITAMEYLINHPEIKHGTIKVGFTPDEEVGKGADHFDVKKFGADLAYTLDGGGIGELECETFNAAKAKVIIEGRNVHPGSAKNKMTNAVLVANKFINMLPENEVPERTEGYEGFFHLLSVKSEVETAELNYIIRDFDRKKFEERKEQIKEVGKKINEEYNKEIVCVKVEDQYYNMKEKIDEVKYVVDIAHDAMKAIDIEPILVPIRGGTDGSRLSFMGLPTPNLFAGGHNFHGRFEFVPVLSMEKAAELVVKIAELYANR</sequence>
<comment type="function">
    <text evidence="1">Cleaves the N-terminal amino acid of tripeptides.</text>
</comment>
<comment type="catalytic activity">
    <reaction evidence="1">
        <text>Release of the N-terminal residue from a tripeptide.</text>
        <dbReference type="EC" id="3.4.11.4"/>
    </reaction>
</comment>
<comment type="cofactor">
    <cofactor evidence="1">
        <name>Zn(2+)</name>
        <dbReference type="ChEBI" id="CHEBI:29105"/>
    </cofactor>
    <text evidence="1">Binds 2 Zn(2+) ions per subunit.</text>
</comment>
<comment type="subcellular location">
    <subcellularLocation>
        <location evidence="1">Cytoplasm</location>
    </subcellularLocation>
</comment>
<comment type="similarity">
    <text evidence="1">Belongs to the peptidase M20B family.</text>
</comment>
<proteinExistence type="inferred from homology"/>
<keyword id="KW-0031">Aminopeptidase</keyword>
<keyword id="KW-0963">Cytoplasm</keyword>
<keyword id="KW-0378">Hydrolase</keyword>
<keyword id="KW-0479">Metal-binding</keyword>
<keyword id="KW-0482">Metalloprotease</keyword>
<keyword id="KW-0645">Protease</keyword>
<keyword id="KW-0862">Zinc</keyword>
<accession>C1FSB0</accession>
<protein>
    <recommendedName>
        <fullName evidence="1">Peptidase T</fullName>
        <ecNumber evidence="1">3.4.11.4</ecNumber>
    </recommendedName>
    <alternativeName>
        <fullName evidence="1">Aminotripeptidase</fullName>
        <shortName evidence="1">Tripeptidase</shortName>
    </alternativeName>
    <alternativeName>
        <fullName evidence="1">Tripeptide aminopeptidase</fullName>
    </alternativeName>
</protein>
<reference key="1">
    <citation type="submission" date="2008-10" db="EMBL/GenBank/DDBJ databases">
        <title>Genome sequence of Clostridium botulinum A2 Kyoto.</title>
        <authorList>
            <person name="Shrivastava S."/>
            <person name="Brinkac L.M."/>
            <person name="Brown J.L."/>
            <person name="Bruce D."/>
            <person name="Detter C.C."/>
            <person name="Johnson E.A."/>
            <person name="Munk C.A."/>
            <person name="Smith L.A."/>
            <person name="Smith T.J."/>
            <person name="Sutton G."/>
            <person name="Brettin T.S."/>
        </authorList>
    </citation>
    <scope>NUCLEOTIDE SEQUENCE [LARGE SCALE GENOMIC DNA]</scope>
    <source>
        <strain>Kyoto / Type A2</strain>
    </source>
</reference>
<gene>
    <name evidence="1" type="primary">pepT</name>
    <name type="ordered locus">CLM_0520</name>
</gene>
<name>PEPT_CLOBJ</name>
<dbReference type="EC" id="3.4.11.4" evidence="1"/>
<dbReference type="EMBL" id="CP001581">
    <property type="protein sequence ID" value="ACO84815.1"/>
    <property type="molecule type" value="Genomic_DNA"/>
</dbReference>
<dbReference type="RefSeq" id="WP_012704429.1">
    <property type="nucleotide sequence ID" value="NC_012563.1"/>
</dbReference>
<dbReference type="SMR" id="C1FSB0"/>
<dbReference type="MEROPS" id="M20.003"/>
<dbReference type="KEGG" id="cby:CLM_0520"/>
<dbReference type="eggNOG" id="COG2195">
    <property type="taxonomic scope" value="Bacteria"/>
</dbReference>
<dbReference type="HOGENOM" id="CLU_053676_0_0_9"/>
<dbReference type="Proteomes" id="UP000001374">
    <property type="component" value="Chromosome"/>
</dbReference>
<dbReference type="GO" id="GO:0005829">
    <property type="term" value="C:cytosol"/>
    <property type="evidence" value="ECO:0007669"/>
    <property type="project" value="TreeGrafter"/>
</dbReference>
<dbReference type="GO" id="GO:0008237">
    <property type="term" value="F:metallopeptidase activity"/>
    <property type="evidence" value="ECO:0007669"/>
    <property type="project" value="UniProtKB-KW"/>
</dbReference>
<dbReference type="GO" id="GO:0045148">
    <property type="term" value="F:tripeptide aminopeptidase activity"/>
    <property type="evidence" value="ECO:0007669"/>
    <property type="project" value="UniProtKB-UniRule"/>
</dbReference>
<dbReference type="GO" id="GO:0008270">
    <property type="term" value="F:zinc ion binding"/>
    <property type="evidence" value="ECO:0007669"/>
    <property type="project" value="UniProtKB-UniRule"/>
</dbReference>
<dbReference type="GO" id="GO:0043171">
    <property type="term" value="P:peptide catabolic process"/>
    <property type="evidence" value="ECO:0007669"/>
    <property type="project" value="UniProtKB-UniRule"/>
</dbReference>
<dbReference type="GO" id="GO:0006508">
    <property type="term" value="P:proteolysis"/>
    <property type="evidence" value="ECO:0007669"/>
    <property type="project" value="UniProtKB-UniRule"/>
</dbReference>
<dbReference type="CDD" id="cd03892">
    <property type="entry name" value="M20_peptT"/>
    <property type="match status" value="1"/>
</dbReference>
<dbReference type="FunFam" id="3.30.70.360:FF:000002">
    <property type="entry name" value="Peptidase T"/>
    <property type="match status" value="1"/>
</dbReference>
<dbReference type="Gene3D" id="3.30.70.360">
    <property type="match status" value="1"/>
</dbReference>
<dbReference type="Gene3D" id="3.40.630.10">
    <property type="entry name" value="Zn peptidases"/>
    <property type="match status" value="1"/>
</dbReference>
<dbReference type="HAMAP" id="MF_00550">
    <property type="entry name" value="Aminopeptidase_M20"/>
    <property type="match status" value="1"/>
</dbReference>
<dbReference type="InterPro" id="IPR001261">
    <property type="entry name" value="ArgE/DapE_CS"/>
</dbReference>
<dbReference type="InterPro" id="IPR036264">
    <property type="entry name" value="Bact_exopeptidase_dim_dom"/>
</dbReference>
<dbReference type="InterPro" id="IPR002933">
    <property type="entry name" value="Peptidase_M20"/>
</dbReference>
<dbReference type="InterPro" id="IPR011650">
    <property type="entry name" value="Peptidase_M20_dimer"/>
</dbReference>
<dbReference type="InterPro" id="IPR010161">
    <property type="entry name" value="Peptidase_M20B"/>
</dbReference>
<dbReference type="NCBIfam" id="TIGR01882">
    <property type="entry name" value="peptidase-T"/>
    <property type="match status" value="1"/>
</dbReference>
<dbReference type="NCBIfam" id="NF003976">
    <property type="entry name" value="PRK05469.1"/>
    <property type="match status" value="1"/>
</dbReference>
<dbReference type="NCBIfam" id="NF009920">
    <property type="entry name" value="PRK13381.1"/>
    <property type="match status" value="1"/>
</dbReference>
<dbReference type="PANTHER" id="PTHR42994">
    <property type="entry name" value="PEPTIDASE T"/>
    <property type="match status" value="1"/>
</dbReference>
<dbReference type="PANTHER" id="PTHR42994:SF1">
    <property type="entry name" value="PEPTIDASE T"/>
    <property type="match status" value="1"/>
</dbReference>
<dbReference type="Pfam" id="PF07687">
    <property type="entry name" value="M20_dimer"/>
    <property type="match status" value="1"/>
</dbReference>
<dbReference type="Pfam" id="PF01546">
    <property type="entry name" value="Peptidase_M20"/>
    <property type="match status" value="1"/>
</dbReference>
<dbReference type="PIRSF" id="PIRSF037215">
    <property type="entry name" value="Peptidase_M20B"/>
    <property type="match status" value="1"/>
</dbReference>
<dbReference type="SUPFAM" id="SSF55031">
    <property type="entry name" value="Bacterial exopeptidase dimerisation domain"/>
    <property type="match status" value="1"/>
</dbReference>
<dbReference type="SUPFAM" id="SSF53187">
    <property type="entry name" value="Zn-dependent exopeptidases"/>
    <property type="match status" value="1"/>
</dbReference>
<dbReference type="PROSITE" id="PS00758">
    <property type="entry name" value="ARGE_DAPE_CPG2_1"/>
    <property type="match status" value="1"/>
</dbReference>
<dbReference type="PROSITE" id="PS00759">
    <property type="entry name" value="ARGE_DAPE_CPG2_2"/>
    <property type="match status" value="1"/>
</dbReference>
<feature type="chain" id="PRO_1000200885" description="Peptidase T">
    <location>
        <begin position="1"/>
        <end position="408"/>
    </location>
</feature>
<feature type="active site" evidence="1">
    <location>
        <position position="80"/>
    </location>
</feature>
<feature type="active site" description="Proton acceptor" evidence="1">
    <location>
        <position position="175"/>
    </location>
</feature>
<feature type="binding site" evidence="1">
    <location>
        <position position="78"/>
    </location>
    <ligand>
        <name>Zn(2+)</name>
        <dbReference type="ChEBI" id="CHEBI:29105"/>
        <label>1</label>
    </ligand>
</feature>
<feature type="binding site" evidence="1">
    <location>
        <position position="141"/>
    </location>
    <ligand>
        <name>Zn(2+)</name>
        <dbReference type="ChEBI" id="CHEBI:29105"/>
        <label>1</label>
    </ligand>
</feature>
<feature type="binding site" evidence="1">
    <location>
        <position position="141"/>
    </location>
    <ligand>
        <name>Zn(2+)</name>
        <dbReference type="ChEBI" id="CHEBI:29105"/>
        <label>2</label>
    </ligand>
</feature>
<feature type="binding site" evidence="1">
    <location>
        <position position="176"/>
    </location>
    <ligand>
        <name>Zn(2+)</name>
        <dbReference type="ChEBI" id="CHEBI:29105"/>
        <label>2</label>
    </ligand>
</feature>
<feature type="binding site" evidence="1">
    <location>
        <position position="198"/>
    </location>
    <ligand>
        <name>Zn(2+)</name>
        <dbReference type="ChEBI" id="CHEBI:29105"/>
        <label>1</label>
    </ligand>
</feature>
<feature type="binding site" evidence="1">
    <location>
        <position position="380"/>
    </location>
    <ligand>
        <name>Zn(2+)</name>
        <dbReference type="ChEBI" id="CHEBI:29105"/>
        <label>2</label>
    </ligand>
</feature>
<evidence type="ECO:0000255" key="1">
    <source>
        <dbReference type="HAMAP-Rule" id="MF_00550"/>
    </source>
</evidence>